<gene>
    <name evidence="1" type="primary">rppH</name>
    <name type="synonym">ialA</name>
    <name evidence="1" type="synonym">nudH</name>
    <name type="ordered locus">R03168</name>
    <name type="ORF">SMc03785</name>
</gene>
<protein>
    <recommendedName>
        <fullName evidence="1">RNA pyrophosphohydrolase</fullName>
        <ecNumber evidence="1">3.6.1.-</ecNumber>
    </recommendedName>
    <alternativeName>
        <fullName evidence="1">(Di)nucleoside polyphosphate hydrolase</fullName>
    </alternativeName>
</protein>
<accession>Q92LA8</accession>
<organism>
    <name type="scientific">Rhizobium meliloti (strain 1021)</name>
    <name type="common">Ensifer meliloti</name>
    <name type="synonym">Sinorhizobium meliloti</name>
    <dbReference type="NCBI Taxonomy" id="266834"/>
    <lineage>
        <taxon>Bacteria</taxon>
        <taxon>Pseudomonadati</taxon>
        <taxon>Pseudomonadota</taxon>
        <taxon>Alphaproteobacteria</taxon>
        <taxon>Hyphomicrobiales</taxon>
        <taxon>Rhizobiaceae</taxon>
        <taxon>Sinorhizobium/Ensifer group</taxon>
        <taxon>Sinorhizobium</taxon>
    </lineage>
</organism>
<keyword id="KW-0378">Hydrolase</keyword>
<keyword id="KW-1185">Reference proteome</keyword>
<evidence type="ECO:0000255" key="1">
    <source>
        <dbReference type="HAMAP-Rule" id="MF_00298"/>
    </source>
</evidence>
<comment type="function">
    <text evidence="1">Accelerates the degradation of transcripts by removing pyrophosphate from the 5'-end of triphosphorylated RNA, leading to a more labile monophosphorylated state that can stimulate subsequent ribonuclease cleavage.</text>
</comment>
<comment type="cofactor">
    <cofactor evidence="1">
        <name>a divalent metal cation</name>
        <dbReference type="ChEBI" id="CHEBI:60240"/>
    </cofactor>
</comment>
<comment type="similarity">
    <text evidence="1">Belongs to the Nudix hydrolase family. RppH subfamily.</text>
</comment>
<feature type="chain" id="PRO_0000057022" description="RNA pyrophosphohydrolase">
    <location>
        <begin position="1"/>
        <end position="167"/>
    </location>
</feature>
<feature type="domain" description="Nudix hydrolase" evidence="1">
    <location>
        <begin position="7"/>
        <end position="160"/>
    </location>
</feature>
<feature type="short sequence motif" description="Nudix box">
    <location>
        <begin position="48"/>
        <end position="69"/>
    </location>
</feature>
<name>RPPH_RHIME</name>
<dbReference type="EC" id="3.6.1.-" evidence="1"/>
<dbReference type="EMBL" id="AL591688">
    <property type="protein sequence ID" value="CAC47747.1"/>
    <property type="molecule type" value="Genomic_DNA"/>
</dbReference>
<dbReference type="RefSeq" id="NP_387274.1">
    <property type="nucleotide sequence ID" value="NC_003047.1"/>
</dbReference>
<dbReference type="SMR" id="Q92LA8"/>
<dbReference type="EnsemblBacteria" id="CAC47747">
    <property type="protein sequence ID" value="CAC47747"/>
    <property type="gene ID" value="SMc03785"/>
</dbReference>
<dbReference type="KEGG" id="sme:SMc03785"/>
<dbReference type="PATRIC" id="fig|266834.11.peg.4717"/>
<dbReference type="eggNOG" id="COG0494">
    <property type="taxonomic scope" value="Bacteria"/>
</dbReference>
<dbReference type="HOGENOM" id="CLU_087195_3_0_5"/>
<dbReference type="OrthoDB" id="9816040at2"/>
<dbReference type="Proteomes" id="UP000001976">
    <property type="component" value="Chromosome"/>
</dbReference>
<dbReference type="GO" id="GO:0034432">
    <property type="term" value="F:bis(5'-adenosyl)-pentaphosphatase activity"/>
    <property type="evidence" value="ECO:0007669"/>
    <property type="project" value="TreeGrafter"/>
</dbReference>
<dbReference type="GO" id="GO:0008893">
    <property type="term" value="F:guanosine-3',5'-bis(diphosphate) 3'-diphosphatase activity"/>
    <property type="evidence" value="ECO:0007669"/>
    <property type="project" value="TreeGrafter"/>
</dbReference>
<dbReference type="GO" id="GO:0006753">
    <property type="term" value="P:nucleoside phosphate metabolic process"/>
    <property type="evidence" value="ECO:0007669"/>
    <property type="project" value="TreeGrafter"/>
</dbReference>
<dbReference type="GO" id="GO:0019693">
    <property type="term" value="P:ribose phosphate metabolic process"/>
    <property type="evidence" value="ECO:0007669"/>
    <property type="project" value="TreeGrafter"/>
</dbReference>
<dbReference type="CDD" id="cd03671">
    <property type="entry name" value="NUDIX_Ap4A_hydrolase_plant_like"/>
    <property type="match status" value="1"/>
</dbReference>
<dbReference type="Gene3D" id="3.90.79.10">
    <property type="entry name" value="Nucleoside Triphosphate Pyrophosphohydrolase"/>
    <property type="match status" value="1"/>
</dbReference>
<dbReference type="HAMAP" id="MF_00298">
    <property type="entry name" value="Nudix_RppH"/>
    <property type="match status" value="1"/>
</dbReference>
<dbReference type="InterPro" id="IPR020476">
    <property type="entry name" value="Nudix_hydrolase"/>
</dbReference>
<dbReference type="InterPro" id="IPR015797">
    <property type="entry name" value="NUDIX_hydrolase-like_dom_sf"/>
</dbReference>
<dbReference type="InterPro" id="IPR020084">
    <property type="entry name" value="NUDIX_hydrolase_CS"/>
</dbReference>
<dbReference type="InterPro" id="IPR000086">
    <property type="entry name" value="NUDIX_hydrolase_dom"/>
</dbReference>
<dbReference type="InterPro" id="IPR022927">
    <property type="entry name" value="RppH"/>
</dbReference>
<dbReference type="NCBIfam" id="NF001938">
    <property type="entry name" value="PRK00714.1-5"/>
    <property type="match status" value="1"/>
</dbReference>
<dbReference type="PANTHER" id="PTHR11839:SF22">
    <property type="entry name" value="NUDIX HYDROLASE 26, CHLOROPLASTIC"/>
    <property type="match status" value="1"/>
</dbReference>
<dbReference type="PANTHER" id="PTHR11839">
    <property type="entry name" value="UDP/ADP-SUGAR PYROPHOSPHATASE"/>
    <property type="match status" value="1"/>
</dbReference>
<dbReference type="Pfam" id="PF00293">
    <property type="entry name" value="NUDIX"/>
    <property type="match status" value="1"/>
</dbReference>
<dbReference type="PRINTS" id="PR00502">
    <property type="entry name" value="NUDIXFAMILY"/>
</dbReference>
<dbReference type="SUPFAM" id="SSF55811">
    <property type="entry name" value="Nudix"/>
    <property type="match status" value="1"/>
</dbReference>
<dbReference type="PROSITE" id="PS51462">
    <property type="entry name" value="NUDIX"/>
    <property type="match status" value="1"/>
</dbReference>
<dbReference type="PROSITE" id="PS00893">
    <property type="entry name" value="NUDIX_BOX"/>
    <property type="match status" value="1"/>
</dbReference>
<reference key="1">
    <citation type="journal article" date="2001" name="Proc. Natl. Acad. Sci. U.S.A.">
        <title>Analysis of the chromosome sequence of the legume symbiont Sinorhizobium meliloti strain 1021.</title>
        <authorList>
            <person name="Capela D."/>
            <person name="Barloy-Hubler F."/>
            <person name="Gouzy J."/>
            <person name="Bothe G."/>
            <person name="Ampe F."/>
            <person name="Batut J."/>
            <person name="Boistard P."/>
            <person name="Becker A."/>
            <person name="Boutry M."/>
            <person name="Cadieu E."/>
            <person name="Dreano S."/>
            <person name="Gloux S."/>
            <person name="Godrie T."/>
            <person name="Goffeau A."/>
            <person name="Kahn D."/>
            <person name="Kiss E."/>
            <person name="Lelaure V."/>
            <person name="Masuy D."/>
            <person name="Pohl T."/>
            <person name="Portetelle D."/>
            <person name="Puehler A."/>
            <person name="Purnelle B."/>
            <person name="Ramsperger U."/>
            <person name="Renard C."/>
            <person name="Thebault P."/>
            <person name="Vandenbol M."/>
            <person name="Weidner S."/>
            <person name="Galibert F."/>
        </authorList>
    </citation>
    <scope>NUCLEOTIDE SEQUENCE [LARGE SCALE GENOMIC DNA]</scope>
    <source>
        <strain>1021</strain>
    </source>
</reference>
<reference key="2">
    <citation type="journal article" date="2001" name="Science">
        <title>The composite genome of the legume symbiont Sinorhizobium meliloti.</title>
        <authorList>
            <person name="Galibert F."/>
            <person name="Finan T.M."/>
            <person name="Long S.R."/>
            <person name="Puehler A."/>
            <person name="Abola P."/>
            <person name="Ampe F."/>
            <person name="Barloy-Hubler F."/>
            <person name="Barnett M.J."/>
            <person name="Becker A."/>
            <person name="Boistard P."/>
            <person name="Bothe G."/>
            <person name="Boutry M."/>
            <person name="Bowser L."/>
            <person name="Buhrmester J."/>
            <person name="Cadieu E."/>
            <person name="Capela D."/>
            <person name="Chain P."/>
            <person name="Cowie A."/>
            <person name="Davis R.W."/>
            <person name="Dreano S."/>
            <person name="Federspiel N.A."/>
            <person name="Fisher R.F."/>
            <person name="Gloux S."/>
            <person name="Godrie T."/>
            <person name="Goffeau A."/>
            <person name="Golding B."/>
            <person name="Gouzy J."/>
            <person name="Gurjal M."/>
            <person name="Hernandez-Lucas I."/>
            <person name="Hong A."/>
            <person name="Huizar L."/>
            <person name="Hyman R.W."/>
            <person name="Jones T."/>
            <person name="Kahn D."/>
            <person name="Kahn M.L."/>
            <person name="Kalman S."/>
            <person name="Keating D.H."/>
            <person name="Kiss E."/>
            <person name="Komp C."/>
            <person name="Lelaure V."/>
            <person name="Masuy D."/>
            <person name="Palm C."/>
            <person name="Peck M.C."/>
            <person name="Pohl T.M."/>
            <person name="Portetelle D."/>
            <person name="Purnelle B."/>
            <person name="Ramsperger U."/>
            <person name="Surzycki R."/>
            <person name="Thebault P."/>
            <person name="Vandenbol M."/>
            <person name="Vorhoelter F.J."/>
            <person name="Weidner S."/>
            <person name="Wells D.H."/>
            <person name="Wong K."/>
            <person name="Yeh K.-C."/>
            <person name="Batut J."/>
        </authorList>
    </citation>
    <scope>NUCLEOTIDE SEQUENCE [LARGE SCALE GENOMIC DNA]</scope>
    <source>
        <strain>1021</strain>
    </source>
</reference>
<sequence length="167" mass="18943">MTAEDLPYRPCVGVMVLNRQGLVWAGHRLAVGNSEYDGSPQLWQMPQGGIDEGEDPLEAACRELYEETGIRSVSLLAEAPDWIHYDLPSHLIGIGLKGKYRGQRQRWYAFRFEGDESEIAINPPPGGHEPEFDAWEWKPMHELPGSIVPFKRRAYEEVVAAFSHLVR</sequence>
<proteinExistence type="inferred from homology"/>